<comment type="function">
    <text evidence="1 3 7">Reverse transcriptase (RT) component of antiviral defense system retron Se72, composed of a non-coding RNA (ncRNA), this reverse transcriptase (RT) and the following cold shock-like protein. Expression of retron Se72 confers protection against bacteriophage lambda. At multiplicity of infection (MOI) of 0.02 cultures slow growth when infected with lambda but do not collapse, at MOI 2 cultures enter growth stasis (PubMed:33157039). Responsible for synthesis of msDNA (a branched molecule with RNA linked by a 2',5'-phosphodiester bond to ssDNA). The retron transcript serves as primer (from a conserved internal G residue) and template for the reaction, and codes for the RT (By similarity). The DNA segment is predicted to be 72 bases long (Probable).</text>
</comment>
<comment type="catalytic activity">
    <reaction evidence="2">
        <text>DNA(n) + a 2'-deoxyribonucleoside 5'-triphosphate = DNA(n+1) + diphosphate</text>
        <dbReference type="Rhea" id="RHEA:22508"/>
        <dbReference type="Rhea" id="RHEA-COMP:17339"/>
        <dbReference type="Rhea" id="RHEA-COMP:17340"/>
        <dbReference type="ChEBI" id="CHEBI:33019"/>
        <dbReference type="ChEBI" id="CHEBI:61560"/>
        <dbReference type="ChEBI" id="CHEBI:173112"/>
        <dbReference type="EC" id="2.7.7.49"/>
    </reaction>
</comment>
<comment type="similarity">
    <text evidence="6">Belongs to the bacterial reverse transcriptase family.</text>
</comment>
<proteinExistence type="evidence at protein level"/>
<dbReference type="EC" id="2.7.7.49" evidence="2"/>
<dbReference type="EMBL" id="AMMS01000284">
    <property type="protein sequence ID" value="KJT75256.1"/>
    <property type="molecule type" value="Genomic_DNA"/>
</dbReference>
<dbReference type="SMR" id="P0DV89"/>
<dbReference type="GO" id="GO:0046872">
    <property type="term" value="F:metal ion binding"/>
    <property type="evidence" value="ECO:0007669"/>
    <property type="project" value="UniProtKB-KW"/>
</dbReference>
<dbReference type="GO" id="GO:0003723">
    <property type="term" value="F:RNA binding"/>
    <property type="evidence" value="ECO:0007669"/>
    <property type="project" value="UniProtKB-KW"/>
</dbReference>
<dbReference type="GO" id="GO:0003964">
    <property type="term" value="F:RNA-directed DNA polymerase activity"/>
    <property type="evidence" value="ECO:0007669"/>
    <property type="project" value="UniProtKB-KW"/>
</dbReference>
<dbReference type="GO" id="GO:0051607">
    <property type="term" value="P:defense response to virus"/>
    <property type="evidence" value="ECO:0007669"/>
    <property type="project" value="UniProtKB-KW"/>
</dbReference>
<dbReference type="CDD" id="cd03487">
    <property type="entry name" value="RT_Bac_retron_II"/>
    <property type="match status" value="1"/>
</dbReference>
<dbReference type="InterPro" id="IPR043502">
    <property type="entry name" value="DNA/RNA_pol_sf"/>
</dbReference>
<dbReference type="InterPro" id="IPR000123">
    <property type="entry name" value="Reverse_transcriptase_msDNA"/>
</dbReference>
<dbReference type="InterPro" id="IPR000477">
    <property type="entry name" value="RT_dom"/>
</dbReference>
<dbReference type="Pfam" id="PF00078">
    <property type="entry name" value="RVT_1"/>
    <property type="match status" value="1"/>
</dbReference>
<dbReference type="PRINTS" id="PR00866">
    <property type="entry name" value="RNADNAPOLMS"/>
</dbReference>
<dbReference type="SUPFAM" id="SSF56672">
    <property type="entry name" value="DNA/RNA polymerases"/>
    <property type="match status" value="1"/>
</dbReference>
<dbReference type="PROSITE" id="PS50878">
    <property type="entry name" value="RT_POL"/>
    <property type="match status" value="1"/>
</dbReference>
<gene>
    <name evidence="6" type="primary">ret</name>
    <name type="ORF">Ga0072986_12846</name>
    <name evidence="5" type="ORF">SEEH8310_20099</name>
</gene>
<evidence type="ECO:0000250" key="1">
    <source>
        <dbReference type="UniProtKB" id="P21325"/>
    </source>
</evidence>
<evidence type="ECO:0000255" key="2">
    <source>
        <dbReference type="PROSITE-ProRule" id="PRU00405"/>
    </source>
</evidence>
<evidence type="ECO:0000269" key="3">
    <source>
    </source>
</evidence>
<evidence type="ECO:0000303" key="4">
    <source>
    </source>
</evidence>
<evidence type="ECO:0000303" key="5">
    <source ref="1"/>
</evidence>
<evidence type="ECO:0000305" key="6"/>
<evidence type="ECO:0000305" key="7">
    <source>
    </source>
</evidence>
<evidence type="ECO:0000312" key="8">
    <source>
        <dbReference type="EMBL" id="KJT75256.1"/>
    </source>
</evidence>
<accession>P0DV89</accession>
<sequence>MNKPRFNGTPVASLDSLSAMLGIERKRLDWIVKSVSMSYKQFKVETGKNKKERQIFEPKRSLKGIQKKINKEIFEKIDYPHYLHGALSGRDYISNAAVHTRKRTVICLDITNFYPSISKKDVCSIFKNLMRFSPDVSLCLTELVTLNNKVPQGGCCSSYIANLLFFNSEYNLYNRLKSMGLSYSRLLDDITISSDKDLSSEEKTKVIKLVHGMVNQYRLSINESKTTIEHSKDSSSKLSVTGLWVKHGVPKLTKENRRYIRYLVYICKKQGAYERHTKEYHDLWNRCSGKVAQMSRLGHVQAVELRAILSEIMPVYDDYKISKLKLMAKHYLNKFTPPLTDDQIRKIDRMLYDFDIVGRTNKNLAKLYRRKLVALLPDR</sequence>
<reference evidence="8" key="1">
    <citation type="submission" date="2015-03" db="EMBL/GenBank/DDBJ databases">
        <title>Serovar diversity of Salmonella subsp. enterica.</title>
        <authorList>
            <person name="Timme R.E."/>
            <person name="Allard M."/>
            <person name="Luo Y."/>
            <person name="Strain E."/>
            <person name="Pettengill J."/>
            <person name="Li C."/>
            <person name="Ottesen A."/>
            <person name="Brown E."/>
        </authorList>
    </citation>
    <scope>NUCLEOTIDE SEQUENCE [LARGE SCALE GENOMIC DNA]</scope>
    <source>
        <strain>579083-10</strain>
    </source>
</reference>
<reference key="2">
    <citation type="journal article" date="2020" name="Cell">
        <title>Bacterial Retrons Function In Anti-Phage Defense.</title>
        <authorList>
            <person name="Millman A."/>
            <person name="Bernheim A."/>
            <person name="Stokar-Avihail A."/>
            <person name="Fedorenko T."/>
            <person name="Voichek M."/>
            <person name="Leavitt A."/>
            <person name="Oppenheimer-Shaanan Y."/>
            <person name="Sorek R."/>
        </authorList>
    </citation>
    <scope>FUNCTION IN ANTIVIRAL DEFENSE</scope>
    <scope>IDENTIFICATION AS A RETRON</scope>
    <source>
        <strain>579083-10</strain>
    </source>
</reference>
<protein>
    <recommendedName>
        <fullName evidence="4">Retron Se72 reverse transcriptase</fullName>
        <shortName evidence="4">RT</shortName>
        <ecNumber evidence="2">2.7.7.49</ecNumber>
    </recommendedName>
</protein>
<feature type="chain" id="PRO_0000456021" description="Retron Se72 reverse transcriptase">
    <location>
        <begin position="1"/>
        <end position="379"/>
    </location>
</feature>
<feature type="domain" description="Reverse transcriptase" evidence="2">
    <location>
        <begin position="1"/>
        <end position="245"/>
    </location>
</feature>
<feature type="binding site" evidence="2">
    <location>
        <position position="109"/>
    </location>
    <ligand>
        <name>Mg(2+)</name>
        <dbReference type="ChEBI" id="CHEBI:18420"/>
        <note>catalytic</note>
    </ligand>
</feature>
<feature type="binding site" evidence="2">
    <location>
        <position position="188"/>
    </location>
    <ligand>
        <name>Mg(2+)</name>
        <dbReference type="ChEBI" id="CHEBI:18420"/>
        <note>catalytic</note>
    </ligand>
</feature>
<feature type="binding site" evidence="2">
    <location>
        <position position="189"/>
    </location>
    <ligand>
        <name>Mg(2+)</name>
        <dbReference type="ChEBI" id="CHEBI:18420"/>
        <note>catalytic</note>
    </ligand>
</feature>
<name>RT72_SALH5</name>
<keyword id="KW-0051">Antiviral defense</keyword>
<keyword id="KW-0460">Magnesium</keyword>
<keyword id="KW-0479">Metal-binding</keyword>
<keyword id="KW-0548">Nucleotidyltransferase</keyword>
<keyword id="KW-0694">RNA-binding</keyword>
<keyword id="KW-0695">RNA-directed DNA polymerase</keyword>
<keyword id="KW-0808">Transferase</keyword>
<organism>
    <name type="scientific">Salmonella heidelberg (strain 579083-10)</name>
    <dbReference type="NCBI Taxonomy" id="1054962"/>
    <lineage>
        <taxon>Bacteria</taxon>
        <taxon>Pseudomonadati</taxon>
        <taxon>Pseudomonadota</taxon>
        <taxon>Gammaproteobacteria</taxon>
        <taxon>Enterobacterales</taxon>
        <taxon>Enterobacteriaceae</taxon>
        <taxon>Salmonella</taxon>
    </lineage>
</organism>